<protein>
    <recommendedName>
        <fullName evidence="1">Dihydroorotate dehydrogenase B (NAD(+)), electron transfer subunit</fullName>
    </recommendedName>
    <alternativeName>
        <fullName evidence="1">Dihydroorotate oxidase B, electron transfer subunit</fullName>
    </alternativeName>
</protein>
<name>PYRK_GEOSW</name>
<feature type="chain" id="PRO_1000213886" description="Dihydroorotate dehydrogenase B (NAD(+)), electron transfer subunit">
    <location>
        <begin position="1"/>
        <end position="257"/>
    </location>
</feature>
<feature type="domain" description="FAD-binding FR-type" evidence="1">
    <location>
        <begin position="2"/>
        <end position="102"/>
    </location>
</feature>
<feature type="binding site" evidence="1">
    <location>
        <begin position="53"/>
        <end position="56"/>
    </location>
    <ligand>
        <name>FAD</name>
        <dbReference type="ChEBI" id="CHEBI:57692"/>
    </ligand>
</feature>
<feature type="binding site" evidence="1">
    <location>
        <begin position="70"/>
        <end position="72"/>
    </location>
    <ligand>
        <name>FAD</name>
        <dbReference type="ChEBI" id="CHEBI:57692"/>
    </ligand>
</feature>
<feature type="binding site" evidence="1">
    <location>
        <begin position="77"/>
        <end position="78"/>
    </location>
    <ligand>
        <name>FAD</name>
        <dbReference type="ChEBI" id="CHEBI:57692"/>
    </ligand>
</feature>
<feature type="binding site" evidence="1">
    <location>
        <position position="221"/>
    </location>
    <ligand>
        <name>[2Fe-2S] cluster</name>
        <dbReference type="ChEBI" id="CHEBI:190135"/>
    </ligand>
</feature>
<feature type="binding site" evidence="1">
    <location>
        <position position="226"/>
    </location>
    <ligand>
        <name>[2Fe-2S] cluster</name>
        <dbReference type="ChEBI" id="CHEBI:190135"/>
    </ligand>
</feature>
<feature type="binding site" evidence="1">
    <location>
        <position position="229"/>
    </location>
    <ligand>
        <name>[2Fe-2S] cluster</name>
        <dbReference type="ChEBI" id="CHEBI:190135"/>
    </ligand>
</feature>
<feature type="binding site" evidence="1">
    <location>
        <position position="244"/>
    </location>
    <ligand>
        <name>[2Fe-2S] cluster</name>
        <dbReference type="ChEBI" id="CHEBI:190135"/>
    </ligand>
</feature>
<comment type="function">
    <text evidence="1">Responsible for channeling the electrons from the oxidation of dihydroorotate from the FMN redox center in the PyrD type B subunit to the ultimate electron acceptor NAD(+).</text>
</comment>
<comment type="cofactor">
    <cofactor evidence="1">
        <name>[2Fe-2S] cluster</name>
        <dbReference type="ChEBI" id="CHEBI:190135"/>
    </cofactor>
    <text evidence="1">Binds 1 [2Fe-2S] cluster per subunit.</text>
</comment>
<comment type="cofactor">
    <cofactor evidence="1">
        <name>FAD</name>
        <dbReference type="ChEBI" id="CHEBI:57692"/>
    </cofactor>
    <text evidence="1">Binds 1 FAD per subunit.</text>
</comment>
<comment type="pathway">
    <text evidence="1">Pyrimidine metabolism; UMP biosynthesis via de novo pathway; orotate from (S)-dihydroorotate (NAD(+) route): step 1/1.</text>
</comment>
<comment type="subunit">
    <text evidence="1">Heterotetramer of 2 PyrK and 2 PyrD type B subunits.</text>
</comment>
<comment type="similarity">
    <text evidence="1">Belongs to the PyrK family.</text>
</comment>
<sequence>MMKQEQMTVVRHKPIAKNIYELMLSGHLVEEMNAPGQFVHVKVTSQADPLLRRPLSLCRIDQNARECTLIYRKEGIGTTLLSEKRPGETIDVLGPLGNGFPLDAAQTGRRALLVGGGIGVPPLYELAKQLVKKGVIVTSVLGFQTKEVVFYEREFAEFGETYIATVDGSHGTKGFVTDVIHERAISFDVLYACGPKPMLKALEQMFPDKEVYLSLEERMGCGIGACFACVCRVPNSETAYKKVCCDGPVFKAGEVVL</sequence>
<accession>C5D8Q1</accession>
<proteinExistence type="inferred from homology"/>
<organism>
    <name type="scientific">Geobacillus sp. (strain WCH70)</name>
    <dbReference type="NCBI Taxonomy" id="471223"/>
    <lineage>
        <taxon>Bacteria</taxon>
        <taxon>Bacillati</taxon>
        <taxon>Bacillota</taxon>
        <taxon>Bacilli</taxon>
        <taxon>Bacillales</taxon>
        <taxon>Anoxybacillaceae</taxon>
        <taxon>Geobacillus</taxon>
    </lineage>
</organism>
<dbReference type="EMBL" id="CP001638">
    <property type="protein sequence ID" value="ACS23908.1"/>
    <property type="molecule type" value="Genomic_DNA"/>
</dbReference>
<dbReference type="SMR" id="C5D8Q1"/>
<dbReference type="STRING" id="471223.GWCH70_1048"/>
<dbReference type="KEGG" id="gwc:GWCH70_1048"/>
<dbReference type="eggNOG" id="COG0543">
    <property type="taxonomic scope" value="Bacteria"/>
</dbReference>
<dbReference type="HOGENOM" id="CLU_003827_1_2_9"/>
<dbReference type="OrthoDB" id="9778346at2"/>
<dbReference type="UniPathway" id="UPA00070">
    <property type="reaction ID" value="UER00945"/>
</dbReference>
<dbReference type="GO" id="GO:0051537">
    <property type="term" value="F:2 iron, 2 sulfur cluster binding"/>
    <property type="evidence" value="ECO:0007669"/>
    <property type="project" value="UniProtKB-KW"/>
</dbReference>
<dbReference type="GO" id="GO:0009055">
    <property type="term" value="F:electron transfer activity"/>
    <property type="evidence" value="ECO:0007669"/>
    <property type="project" value="UniProtKB-UniRule"/>
</dbReference>
<dbReference type="GO" id="GO:0050660">
    <property type="term" value="F:flavin adenine dinucleotide binding"/>
    <property type="evidence" value="ECO:0007669"/>
    <property type="project" value="InterPro"/>
</dbReference>
<dbReference type="GO" id="GO:0046872">
    <property type="term" value="F:metal ion binding"/>
    <property type="evidence" value="ECO:0007669"/>
    <property type="project" value="UniProtKB-KW"/>
</dbReference>
<dbReference type="GO" id="GO:0016491">
    <property type="term" value="F:oxidoreductase activity"/>
    <property type="evidence" value="ECO:0007669"/>
    <property type="project" value="InterPro"/>
</dbReference>
<dbReference type="GO" id="GO:0044205">
    <property type="term" value="P:'de novo' UMP biosynthetic process"/>
    <property type="evidence" value="ECO:0007669"/>
    <property type="project" value="UniProtKB-UniRule"/>
</dbReference>
<dbReference type="CDD" id="cd06218">
    <property type="entry name" value="DHOD_e_trans"/>
    <property type="match status" value="1"/>
</dbReference>
<dbReference type="FunFam" id="3.40.50.80:FF:000017">
    <property type="entry name" value="Dihydroorotate dehydrogenase B (NAD(+)), electron transfer subunit"/>
    <property type="match status" value="1"/>
</dbReference>
<dbReference type="Gene3D" id="2.10.240.10">
    <property type="entry name" value="Dihydroorotate dehydrogenase, electron transfer subunit"/>
    <property type="match status" value="1"/>
</dbReference>
<dbReference type="Gene3D" id="3.40.50.80">
    <property type="entry name" value="Nucleotide-binding domain of ferredoxin-NADP reductase (FNR) module"/>
    <property type="match status" value="1"/>
</dbReference>
<dbReference type="Gene3D" id="2.40.30.10">
    <property type="entry name" value="Translation factors"/>
    <property type="match status" value="1"/>
</dbReference>
<dbReference type="HAMAP" id="MF_01211">
    <property type="entry name" value="DHODB_Fe_S_bind"/>
    <property type="match status" value="1"/>
</dbReference>
<dbReference type="InterPro" id="IPR012165">
    <property type="entry name" value="Cyt_c3_hydrogenase_gsu"/>
</dbReference>
<dbReference type="InterPro" id="IPR037117">
    <property type="entry name" value="Dihydroorotate_DH_ele_sf"/>
</dbReference>
<dbReference type="InterPro" id="IPR019480">
    <property type="entry name" value="Dihydroorotate_DH_Fe-S-bd"/>
</dbReference>
<dbReference type="InterPro" id="IPR023455">
    <property type="entry name" value="Dihydroorotate_DHASE_ETsu"/>
</dbReference>
<dbReference type="InterPro" id="IPR017927">
    <property type="entry name" value="FAD-bd_FR_type"/>
</dbReference>
<dbReference type="InterPro" id="IPR039261">
    <property type="entry name" value="FNR_nucleotide-bd"/>
</dbReference>
<dbReference type="InterPro" id="IPR001433">
    <property type="entry name" value="OxRdtase_FAD/NAD-bd"/>
</dbReference>
<dbReference type="InterPro" id="IPR050353">
    <property type="entry name" value="PyrK_electron_transfer"/>
</dbReference>
<dbReference type="InterPro" id="IPR017938">
    <property type="entry name" value="Riboflavin_synthase-like_b-brl"/>
</dbReference>
<dbReference type="NCBIfam" id="NF000797">
    <property type="entry name" value="PRK00054.1-2"/>
    <property type="match status" value="1"/>
</dbReference>
<dbReference type="NCBIfam" id="NF000799">
    <property type="entry name" value="PRK00054.1-4"/>
    <property type="match status" value="1"/>
</dbReference>
<dbReference type="PANTHER" id="PTHR43513">
    <property type="entry name" value="DIHYDROOROTATE DEHYDROGENASE B (NAD(+)), ELECTRON TRANSFER SUBUNIT"/>
    <property type="match status" value="1"/>
</dbReference>
<dbReference type="PANTHER" id="PTHR43513:SF3">
    <property type="entry name" value="DIHYDROOROTATE DEHYDROGENASE B (NAD(+)), ELECTRON TRANSFER SUBUNIT-RELATED"/>
    <property type="match status" value="1"/>
</dbReference>
<dbReference type="Pfam" id="PF10418">
    <property type="entry name" value="DHODB_Fe-S_bind"/>
    <property type="match status" value="1"/>
</dbReference>
<dbReference type="Pfam" id="PF00175">
    <property type="entry name" value="NAD_binding_1"/>
    <property type="match status" value="1"/>
</dbReference>
<dbReference type="PIRSF" id="PIRSF006816">
    <property type="entry name" value="Cyc3_hyd_g"/>
    <property type="match status" value="1"/>
</dbReference>
<dbReference type="PRINTS" id="PR00409">
    <property type="entry name" value="PHDIOXRDTASE"/>
</dbReference>
<dbReference type="SUPFAM" id="SSF52343">
    <property type="entry name" value="Ferredoxin reductase-like, C-terminal NADP-linked domain"/>
    <property type="match status" value="1"/>
</dbReference>
<dbReference type="SUPFAM" id="SSF63380">
    <property type="entry name" value="Riboflavin synthase domain-like"/>
    <property type="match status" value="1"/>
</dbReference>
<dbReference type="PROSITE" id="PS51384">
    <property type="entry name" value="FAD_FR"/>
    <property type="match status" value="1"/>
</dbReference>
<reference key="1">
    <citation type="submission" date="2009-06" db="EMBL/GenBank/DDBJ databases">
        <title>Complete sequence of chromosome of Geopacillus sp. WCH70.</title>
        <authorList>
            <consortium name="US DOE Joint Genome Institute"/>
            <person name="Lucas S."/>
            <person name="Copeland A."/>
            <person name="Lapidus A."/>
            <person name="Glavina del Rio T."/>
            <person name="Dalin E."/>
            <person name="Tice H."/>
            <person name="Bruce D."/>
            <person name="Goodwin L."/>
            <person name="Pitluck S."/>
            <person name="Chertkov O."/>
            <person name="Brettin T."/>
            <person name="Detter J.C."/>
            <person name="Han C."/>
            <person name="Larimer F."/>
            <person name="Land M."/>
            <person name="Hauser L."/>
            <person name="Kyrpides N."/>
            <person name="Mikhailova N."/>
            <person name="Brumm P."/>
            <person name="Mead D.A."/>
            <person name="Richardson P."/>
        </authorList>
    </citation>
    <scope>NUCLEOTIDE SEQUENCE [LARGE SCALE GENOMIC DNA]</scope>
    <source>
        <strain>WCH70</strain>
    </source>
</reference>
<gene>
    <name evidence="1" type="primary">pyrK</name>
    <name type="ordered locus">GWCH70_1048</name>
</gene>
<keyword id="KW-0001">2Fe-2S</keyword>
<keyword id="KW-0249">Electron transport</keyword>
<keyword id="KW-0274">FAD</keyword>
<keyword id="KW-0285">Flavoprotein</keyword>
<keyword id="KW-0408">Iron</keyword>
<keyword id="KW-0411">Iron-sulfur</keyword>
<keyword id="KW-0479">Metal-binding</keyword>
<keyword id="KW-0665">Pyrimidine biosynthesis</keyword>
<keyword id="KW-0813">Transport</keyword>
<evidence type="ECO:0000255" key="1">
    <source>
        <dbReference type="HAMAP-Rule" id="MF_01211"/>
    </source>
</evidence>